<organism>
    <name type="scientific">Chlamydia caviae (strain ATCC VR-813 / DSM 19441 / 03DC25 / GPIC)</name>
    <name type="common">Chlamydophila caviae</name>
    <dbReference type="NCBI Taxonomy" id="227941"/>
    <lineage>
        <taxon>Bacteria</taxon>
        <taxon>Pseudomonadati</taxon>
        <taxon>Chlamydiota</taxon>
        <taxon>Chlamydiia</taxon>
        <taxon>Chlamydiales</taxon>
        <taxon>Chlamydiaceae</taxon>
        <taxon>Chlamydia/Chlamydophila group</taxon>
        <taxon>Chlamydia</taxon>
    </lineage>
</organism>
<name>DAPA_CHLCV</name>
<accession>Q822H0</accession>
<proteinExistence type="inferred from homology"/>
<evidence type="ECO:0000255" key="1">
    <source>
        <dbReference type="HAMAP-Rule" id="MF_00418"/>
    </source>
</evidence>
<evidence type="ECO:0000305" key="2"/>
<feature type="chain" id="PRO_0000103098" description="4-hydroxy-tetrahydrodipicolinate synthase">
    <location>
        <begin position="1"/>
        <end position="289"/>
    </location>
</feature>
<feature type="active site" description="Proton donor/acceptor" evidence="1">
    <location>
        <position position="129"/>
    </location>
</feature>
<feature type="active site" description="Schiff-base intermediate with substrate" evidence="1">
    <location>
        <position position="157"/>
    </location>
</feature>
<feature type="binding site" evidence="1">
    <location>
        <position position="42"/>
    </location>
    <ligand>
        <name>pyruvate</name>
        <dbReference type="ChEBI" id="CHEBI:15361"/>
    </ligand>
</feature>
<feature type="binding site" evidence="1">
    <location>
        <position position="198"/>
    </location>
    <ligand>
        <name>pyruvate</name>
        <dbReference type="ChEBI" id="CHEBI:15361"/>
    </ligand>
</feature>
<feature type="site" description="Part of a proton relay during catalysis" evidence="1">
    <location>
        <position position="41"/>
    </location>
</feature>
<feature type="site" description="Part of a proton relay during catalysis" evidence="1">
    <location>
        <position position="103"/>
    </location>
</feature>
<sequence length="289" mass="32038">MKLLTACITPFLPNYEIDFLSFERILYSQKKEGNGVVLLGSTGESLALTVKEKESLVAFACSLKLQIPIVVGVSGTSLNDALEWMKICHAYPIDGFLIPSPIYTKPGVYGQTLWFESLLNTTDKPVILYNIPSRAGTPLYLETVGALASHPSCYGVKDSGGSIERCREYAQIAPHLVVYCGDDSLWPQMHSYGAQGLISVLSNSWPREARSYVDNPYQESNTLLWQELSLWLSLTTNPIAIKAVLAYKQDIAHSVLRLPLSIADLQNAEALPNVVEKMLKWSQIYPVHT</sequence>
<keyword id="KW-0028">Amino-acid biosynthesis</keyword>
<keyword id="KW-0963">Cytoplasm</keyword>
<keyword id="KW-0220">Diaminopimelate biosynthesis</keyword>
<keyword id="KW-0456">Lyase</keyword>
<keyword id="KW-0457">Lysine biosynthesis</keyword>
<keyword id="KW-0704">Schiff base</keyword>
<gene>
    <name evidence="1" type="primary">dapA</name>
    <name type="ordered locus">CCA_00712</name>
</gene>
<dbReference type="EC" id="4.3.3.7" evidence="1"/>
<dbReference type="EMBL" id="AE015925">
    <property type="protein sequence ID" value="AAP05454.1"/>
    <property type="molecule type" value="Genomic_DNA"/>
</dbReference>
<dbReference type="RefSeq" id="WP_011006668.1">
    <property type="nucleotide sequence ID" value="NC_003361.3"/>
</dbReference>
<dbReference type="SMR" id="Q822H0"/>
<dbReference type="STRING" id="227941.CCA_00712"/>
<dbReference type="KEGG" id="cca:CCA_00712"/>
<dbReference type="eggNOG" id="COG0329">
    <property type="taxonomic scope" value="Bacteria"/>
</dbReference>
<dbReference type="HOGENOM" id="CLU_049343_7_0_0"/>
<dbReference type="OrthoDB" id="9782828at2"/>
<dbReference type="UniPathway" id="UPA00034">
    <property type="reaction ID" value="UER00017"/>
</dbReference>
<dbReference type="Proteomes" id="UP000002193">
    <property type="component" value="Chromosome"/>
</dbReference>
<dbReference type="GO" id="GO:0005829">
    <property type="term" value="C:cytosol"/>
    <property type="evidence" value="ECO:0007669"/>
    <property type="project" value="TreeGrafter"/>
</dbReference>
<dbReference type="GO" id="GO:0008840">
    <property type="term" value="F:4-hydroxy-tetrahydrodipicolinate synthase activity"/>
    <property type="evidence" value="ECO:0007669"/>
    <property type="project" value="UniProtKB-UniRule"/>
</dbReference>
<dbReference type="GO" id="GO:0019877">
    <property type="term" value="P:diaminopimelate biosynthetic process"/>
    <property type="evidence" value="ECO:0007669"/>
    <property type="project" value="UniProtKB-UniRule"/>
</dbReference>
<dbReference type="GO" id="GO:0009089">
    <property type="term" value="P:lysine biosynthetic process via diaminopimelate"/>
    <property type="evidence" value="ECO:0007669"/>
    <property type="project" value="UniProtKB-UniRule"/>
</dbReference>
<dbReference type="Gene3D" id="3.20.20.70">
    <property type="entry name" value="Aldolase class I"/>
    <property type="match status" value="1"/>
</dbReference>
<dbReference type="HAMAP" id="MF_00418">
    <property type="entry name" value="DapA"/>
    <property type="match status" value="1"/>
</dbReference>
<dbReference type="InterPro" id="IPR013785">
    <property type="entry name" value="Aldolase_TIM"/>
</dbReference>
<dbReference type="InterPro" id="IPR005263">
    <property type="entry name" value="DapA"/>
</dbReference>
<dbReference type="InterPro" id="IPR002220">
    <property type="entry name" value="DapA-like"/>
</dbReference>
<dbReference type="InterPro" id="IPR020625">
    <property type="entry name" value="Schiff_base-form_aldolases_AS"/>
</dbReference>
<dbReference type="InterPro" id="IPR020624">
    <property type="entry name" value="Schiff_base-form_aldolases_CS"/>
</dbReference>
<dbReference type="NCBIfam" id="TIGR00674">
    <property type="entry name" value="dapA"/>
    <property type="match status" value="1"/>
</dbReference>
<dbReference type="PANTHER" id="PTHR12128:SF66">
    <property type="entry name" value="4-HYDROXY-2-OXOGLUTARATE ALDOLASE, MITOCHONDRIAL"/>
    <property type="match status" value="1"/>
</dbReference>
<dbReference type="PANTHER" id="PTHR12128">
    <property type="entry name" value="DIHYDRODIPICOLINATE SYNTHASE"/>
    <property type="match status" value="1"/>
</dbReference>
<dbReference type="Pfam" id="PF00701">
    <property type="entry name" value="DHDPS"/>
    <property type="match status" value="1"/>
</dbReference>
<dbReference type="PIRSF" id="PIRSF001365">
    <property type="entry name" value="DHDPS"/>
    <property type="match status" value="1"/>
</dbReference>
<dbReference type="PRINTS" id="PR00146">
    <property type="entry name" value="DHPICSNTHASE"/>
</dbReference>
<dbReference type="SMART" id="SM01130">
    <property type="entry name" value="DHDPS"/>
    <property type="match status" value="1"/>
</dbReference>
<dbReference type="SUPFAM" id="SSF51569">
    <property type="entry name" value="Aldolase"/>
    <property type="match status" value="1"/>
</dbReference>
<dbReference type="PROSITE" id="PS00665">
    <property type="entry name" value="DHDPS_1"/>
    <property type="match status" value="1"/>
</dbReference>
<dbReference type="PROSITE" id="PS00666">
    <property type="entry name" value="DHDPS_2"/>
    <property type="match status" value="1"/>
</dbReference>
<reference key="1">
    <citation type="journal article" date="2003" name="Nucleic Acids Res.">
        <title>Genome sequence of Chlamydophila caviae (Chlamydia psittaci GPIC): examining the role of niche-specific genes in the evolution of the Chlamydiaceae.</title>
        <authorList>
            <person name="Read T.D."/>
            <person name="Myers G.S.A."/>
            <person name="Brunham R.C."/>
            <person name="Nelson W.C."/>
            <person name="Paulsen I.T."/>
            <person name="Heidelberg J.F."/>
            <person name="Holtzapple E.K."/>
            <person name="Khouri H.M."/>
            <person name="Federova N.B."/>
            <person name="Carty H.A."/>
            <person name="Umayam L.A."/>
            <person name="Haft D.H."/>
            <person name="Peterson J.D."/>
            <person name="Beanan M.J."/>
            <person name="White O."/>
            <person name="Salzberg S.L."/>
            <person name="Hsia R.-C."/>
            <person name="McClarty G."/>
            <person name="Rank R.G."/>
            <person name="Bavoil P.M."/>
            <person name="Fraser C.M."/>
        </authorList>
    </citation>
    <scope>NUCLEOTIDE SEQUENCE [LARGE SCALE GENOMIC DNA]</scope>
    <source>
        <strain>ATCC VR-813 / DSM 19441 / 03DC25 / GPIC</strain>
    </source>
</reference>
<comment type="function">
    <text evidence="1">Catalyzes the condensation of (S)-aspartate-beta-semialdehyde [(S)-ASA] and pyruvate to 4-hydroxy-tetrahydrodipicolinate (HTPA).</text>
</comment>
<comment type="catalytic activity">
    <reaction evidence="1">
        <text>L-aspartate 4-semialdehyde + pyruvate = (2S,4S)-4-hydroxy-2,3,4,5-tetrahydrodipicolinate + H2O + H(+)</text>
        <dbReference type="Rhea" id="RHEA:34171"/>
        <dbReference type="ChEBI" id="CHEBI:15361"/>
        <dbReference type="ChEBI" id="CHEBI:15377"/>
        <dbReference type="ChEBI" id="CHEBI:15378"/>
        <dbReference type="ChEBI" id="CHEBI:67139"/>
        <dbReference type="ChEBI" id="CHEBI:537519"/>
        <dbReference type="EC" id="4.3.3.7"/>
    </reaction>
</comment>
<comment type="pathway">
    <text evidence="1">Amino-acid biosynthesis; L-lysine biosynthesis via DAP pathway; (S)-tetrahydrodipicolinate from L-aspartate: step 3/4.</text>
</comment>
<comment type="subunit">
    <text evidence="1">Homotetramer; dimer of dimers.</text>
</comment>
<comment type="subcellular location">
    <subcellularLocation>
        <location evidence="1">Cytoplasm</location>
    </subcellularLocation>
</comment>
<comment type="similarity">
    <text evidence="1">Belongs to the DapA family.</text>
</comment>
<comment type="caution">
    <text evidence="2">Was originally thought to be a dihydrodipicolinate synthase (DHDPS), catalyzing the condensation of (S)-aspartate-beta-semialdehyde [(S)-ASA] and pyruvate to dihydrodipicolinate (DHDP). However, it was shown in E.coli that the product of the enzymatic reaction is not dihydrodipicolinate but in fact (4S)-4-hydroxy-2,3,4,5-tetrahydro-(2S)-dipicolinic acid (HTPA), and that the consecutive dehydration reaction leading to DHDP is not spontaneous but catalyzed by DapB.</text>
</comment>
<protein>
    <recommendedName>
        <fullName evidence="1">4-hydroxy-tetrahydrodipicolinate synthase</fullName>
        <shortName evidence="1">HTPA synthase</shortName>
        <ecNumber evidence="1">4.3.3.7</ecNumber>
    </recommendedName>
</protein>